<accession>Q82MN2</accession>
<feature type="chain" id="PRO_0000160859" description="L-threonine 3-dehydrogenase">
    <location>
        <begin position="1"/>
        <end position="342"/>
    </location>
</feature>
<feature type="active site" description="Charge relay system" evidence="1">
    <location>
        <position position="40"/>
    </location>
</feature>
<feature type="active site" description="Charge relay system" evidence="1">
    <location>
        <position position="43"/>
    </location>
</feature>
<feature type="binding site" evidence="1">
    <location>
        <position position="38"/>
    </location>
    <ligand>
        <name>Zn(2+)</name>
        <dbReference type="ChEBI" id="CHEBI:29105"/>
        <label>1</label>
        <note>catalytic</note>
    </ligand>
</feature>
<feature type="binding site" evidence="1">
    <location>
        <position position="63"/>
    </location>
    <ligand>
        <name>Zn(2+)</name>
        <dbReference type="ChEBI" id="CHEBI:29105"/>
        <label>1</label>
        <note>catalytic</note>
    </ligand>
</feature>
<feature type="binding site" evidence="1">
    <location>
        <position position="64"/>
    </location>
    <ligand>
        <name>Zn(2+)</name>
        <dbReference type="ChEBI" id="CHEBI:29105"/>
        <label>1</label>
        <note>catalytic</note>
    </ligand>
</feature>
<feature type="binding site" evidence="1">
    <location>
        <position position="93"/>
    </location>
    <ligand>
        <name>Zn(2+)</name>
        <dbReference type="ChEBI" id="CHEBI:29105"/>
        <label>2</label>
    </ligand>
</feature>
<feature type="binding site" evidence="1">
    <location>
        <position position="96"/>
    </location>
    <ligand>
        <name>Zn(2+)</name>
        <dbReference type="ChEBI" id="CHEBI:29105"/>
        <label>2</label>
    </ligand>
</feature>
<feature type="binding site" evidence="1">
    <location>
        <position position="99"/>
    </location>
    <ligand>
        <name>Zn(2+)</name>
        <dbReference type="ChEBI" id="CHEBI:29105"/>
        <label>2</label>
    </ligand>
</feature>
<feature type="binding site" evidence="1">
    <location>
        <position position="107"/>
    </location>
    <ligand>
        <name>Zn(2+)</name>
        <dbReference type="ChEBI" id="CHEBI:29105"/>
        <label>2</label>
    </ligand>
</feature>
<feature type="binding site" evidence="1">
    <location>
        <position position="175"/>
    </location>
    <ligand>
        <name>NAD(+)</name>
        <dbReference type="ChEBI" id="CHEBI:57540"/>
    </ligand>
</feature>
<feature type="binding site" evidence="1">
    <location>
        <position position="195"/>
    </location>
    <ligand>
        <name>NAD(+)</name>
        <dbReference type="ChEBI" id="CHEBI:57540"/>
    </ligand>
</feature>
<feature type="binding site" evidence="1">
    <location>
        <position position="200"/>
    </location>
    <ligand>
        <name>NAD(+)</name>
        <dbReference type="ChEBI" id="CHEBI:57540"/>
    </ligand>
</feature>
<feature type="binding site" evidence="1">
    <location>
        <begin position="262"/>
        <end position="264"/>
    </location>
    <ligand>
        <name>NAD(+)</name>
        <dbReference type="ChEBI" id="CHEBI:57540"/>
    </ligand>
</feature>
<feature type="binding site" evidence="1">
    <location>
        <begin position="286"/>
        <end position="287"/>
    </location>
    <ligand>
        <name>NAD(+)</name>
        <dbReference type="ChEBI" id="CHEBI:57540"/>
    </ligand>
</feature>
<feature type="site" description="Important for catalytic activity for the proton relay mechanism but does not participate directly in the coordination of zinc atom" evidence="1">
    <location>
        <position position="148"/>
    </location>
</feature>
<name>TDH_STRAW</name>
<protein>
    <recommendedName>
        <fullName evidence="1">L-threonine 3-dehydrogenase</fullName>
        <shortName evidence="1">TDH</shortName>
        <ecNumber evidence="1">1.1.1.103</ecNumber>
    </recommendedName>
</protein>
<dbReference type="EC" id="1.1.1.103" evidence="1"/>
<dbReference type="EMBL" id="BA000030">
    <property type="protein sequence ID" value="BAC69339.1"/>
    <property type="molecule type" value="Genomic_DNA"/>
</dbReference>
<dbReference type="RefSeq" id="WP_010983067.1">
    <property type="nucleotide sequence ID" value="NZ_JZJK01000086.1"/>
</dbReference>
<dbReference type="SMR" id="Q82MN2"/>
<dbReference type="GeneID" id="41538728"/>
<dbReference type="KEGG" id="sma:SAVERM_1628"/>
<dbReference type="eggNOG" id="COG1063">
    <property type="taxonomic scope" value="Bacteria"/>
</dbReference>
<dbReference type="HOGENOM" id="CLU_026673_11_0_11"/>
<dbReference type="OrthoDB" id="241504at2"/>
<dbReference type="UniPathway" id="UPA00046">
    <property type="reaction ID" value="UER00505"/>
</dbReference>
<dbReference type="Proteomes" id="UP000000428">
    <property type="component" value="Chromosome"/>
</dbReference>
<dbReference type="GO" id="GO:0005737">
    <property type="term" value="C:cytoplasm"/>
    <property type="evidence" value="ECO:0007669"/>
    <property type="project" value="UniProtKB-SubCell"/>
</dbReference>
<dbReference type="GO" id="GO:0008743">
    <property type="term" value="F:L-threonine 3-dehydrogenase activity"/>
    <property type="evidence" value="ECO:0007669"/>
    <property type="project" value="UniProtKB-UniRule"/>
</dbReference>
<dbReference type="GO" id="GO:0008270">
    <property type="term" value="F:zinc ion binding"/>
    <property type="evidence" value="ECO:0007669"/>
    <property type="project" value="UniProtKB-UniRule"/>
</dbReference>
<dbReference type="GO" id="GO:0019518">
    <property type="term" value="P:L-threonine catabolic process to glycine"/>
    <property type="evidence" value="ECO:0007669"/>
    <property type="project" value="UniProtKB-UniPathway"/>
</dbReference>
<dbReference type="Gene3D" id="3.90.180.10">
    <property type="entry name" value="Medium-chain alcohol dehydrogenases, catalytic domain"/>
    <property type="match status" value="1"/>
</dbReference>
<dbReference type="Gene3D" id="3.40.50.720">
    <property type="entry name" value="NAD(P)-binding Rossmann-like Domain"/>
    <property type="match status" value="1"/>
</dbReference>
<dbReference type="HAMAP" id="MF_00627">
    <property type="entry name" value="Thr_dehydrog"/>
    <property type="match status" value="1"/>
</dbReference>
<dbReference type="InterPro" id="IPR013149">
    <property type="entry name" value="ADH-like_C"/>
</dbReference>
<dbReference type="InterPro" id="IPR013154">
    <property type="entry name" value="ADH-like_N"/>
</dbReference>
<dbReference type="InterPro" id="IPR002328">
    <property type="entry name" value="ADH_Zn_CS"/>
</dbReference>
<dbReference type="InterPro" id="IPR011032">
    <property type="entry name" value="GroES-like_sf"/>
</dbReference>
<dbReference type="InterPro" id="IPR004627">
    <property type="entry name" value="L-Threonine_3-DHase"/>
</dbReference>
<dbReference type="InterPro" id="IPR036291">
    <property type="entry name" value="NAD(P)-bd_dom_sf"/>
</dbReference>
<dbReference type="InterPro" id="IPR050129">
    <property type="entry name" value="Zn_alcohol_dh"/>
</dbReference>
<dbReference type="NCBIfam" id="NF003808">
    <property type="entry name" value="PRK05396.1"/>
    <property type="match status" value="1"/>
</dbReference>
<dbReference type="PANTHER" id="PTHR43401">
    <property type="entry name" value="L-THREONINE 3-DEHYDROGENASE"/>
    <property type="match status" value="1"/>
</dbReference>
<dbReference type="PANTHER" id="PTHR43401:SF2">
    <property type="entry name" value="L-THREONINE 3-DEHYDROGENASE"/>
    <property type="match status" value="1"/>
</dbReference>
<dbReference type="Pfam" id="PF08240">
    <property type="entry name" value="ADH_N"/>
    <property type="match status" value="1"/>
</dbReference>
<dbReference type="Pfam" id="PF00107">
    <property type="entry name" value="ADH_zinc_N"/>
    <property type="match status" value="1"/>
</dbReference>
<dbReference type="SUPFAM" id="SSF50129">
    <property type="entry name" value="GroES-like"/>
    <property type="match status" value="1"/>
</dbReference>
<dbReference type="SUPFAM" id="SSF51735">
    <property type="entry name" value="NAD(P)-binding Rossmann-fold domains"/>
    <property type="match status" value="1"/>
</dbReference>
<dbReference type="PROSITE" id="PS00059">
    <property type="entry name" value="ADH_ZINC"/>
    <property type="match status" value="1"/>
</dbReference>
<reference key="1">
    <citation type="journal article" date="2001" name="Proc. Natl. Acad. Sci. U.S.A.">
        <title>Genome sequence of an industrial microorganism Streptomyces avermitilis: deducing the ability of producing secondary metabolites.</title>
        <authorList>
            <person name="Omura S."/>
            <person name="Ikeda H."/>
            <person name="Ishikawa J."/>
            <person name="Hanamoto A."/>
            <person name="Takahashi C."/>
            <person name="Shinose M."/>
            <person name="Takahashi Y."/>
            <person name="Horikawa H."/>
            <person name="Nakazawa H."/>
            <person name="Osonoe T."/>
            <person name="Kikuchi H."/>
            <person name="Shiba T."/>
            <person name="Sakaki Y."/>
            <person name="Hattori M."/>
        </authorList>
    </citation>
    <scope>NUCLEOTIDE SEQUENCE [LARGE SCALE GENOMIC DNA]</scope>
    <source>
        <strain>ATCC 31267 / DSM 46492 / JCM 5070 / NBRC 14893 / NCIMB 12804 / NRRL 8165 / MA-4680</strain>
    </source>
</reference>
<reference key="2">
    <citation type="journal article" date="2003" name="Nat. Biotechnol.">
        <title>Complete genome sequence and comparative analysis of the industrial microorganism Streptomyces avermitilis.</title>
        <authorList>
            <person name="Ikeda H."/>
            <person name="Ishikawa J."/>
            <person name="Hanamoto A."/>
            <person name="Shinose M."/>
            <person name="Kikuchi H."/>
            <person name="Shiba T."/>
            <person name="Sakaki Y."/>
            <person name="Hattori M."/>
            <person name="Omura S."/>
        </authorList>
    </citation>
    <scope>NUCLEOTIDE SEQUENCE [LARGE SCALE GENOMIC DNA]</scope>
    <source>
        <strain>ATCC 31267 / DSM 46492 / JCM 5070 / NBRC 14893 / NCIMB 12804 / NRRL 8165 / MA-4680</strain>
    </source>
</reference>
<comment type="function">
    <text evidence="1">Catalyzes the NAD(+)-dependent oxidation of L-threonine to 2-amino-3-ketobutyrate.</text>
</comment>
<comment type="catalytic activity">
    <reaction evidence="1">
        <text>L-threonine + NAD(+) = (2S)-2-amino-3-oxobutanoate + NADH + H(+)</text>
        <dbReference type="Rhea" id="RHEA:13161"/>
        <dbReference type="ChEBI" id="CHEBI:15378"/>
        <dbReference type="ChEBI" id="CHEBI:57540"/>
        <dbReference type="ChEBI" id="CHEBI:57926"/>
        <dbReference type="ChEBI" id="CHEBI:57945"/>
        <dbReference type="ChEBI" id="CHEBI:78948"/>
        <dbReference type="EC" id="1.1.1.103"/>
    </reaction>
</comment>
<comment type="cofactor">
    <cofactor evidence="1">
        <name>Zn(2+)</name>
        <dbReference type="ChEBI" id="CHEBI:29105"/>
    </cofactor>
    <text evidence="1">Binds 2 Zn(2+) ions per subunit.</text>
</comment>
<comment type="pathway">
    <text evidence="1">Amino-acid degradation; L-threonine degradation via oxydo-reductase pathway; glycine from L-threonine: step 1/2.</text>
</comment>
<comment type="subunit">
    <text evidence="1">Homotetramer.</text>
</comment>
<comment type="subcellular location">
    <subcellularLocation>
        <location evidence="1">Cytoplasm</location>
    </subcellularLocation>
</comment>
<comment type="similarity">
    <text evidence="1">Belongs to the zinc-containing alcohol dehydrogenase family.</text>
</comment>
<evidence type="ECO:0000255" key="1">
    <source>
        <dbReference type="HAMAP-Rule" id="MF_00627"/>
    </source>
</evidence>
<proteinExistence type="inferred from homology"/>
<sequence length="342" mass="36710">MKALVKEKAEPGLWLMDVPEPEIGPGDVLIKVLRTGICGTDLHIRSWDGWAQQAVRTPLVLGHEFVGEVVETGRDVVDIKAGDRVSGEGHLVCGKCRNCQAGRRHLCRATVGLGVGRDGAFAEYVALPAANVWVHRVPVDLDVAAIFDPFGNAVHTALSFPLVGEDVLITGAGPIGLMAAAVARHAGARNVMITDVSEERLELARKIGVSLALNVADTTIADGQRALGLREGFDIGLEMSGRPEAMRDMIANMTHGGRIAMLGLPSQEFPVDWARIVTSMITIKGIYGREMFETWYAMSVLLEGGLDLAPVITGRYGYRDYEAAFADAASGRGGKVILDWTL</sequence>
<organism>
    <name type="scientific">Streptomyces avermitilis (strain ATCC 31267 / DSM 46492 / JCM 5070 / NBRC 14893 / NCIMB 12804 / NRRL 8165 / MA-4680)</name>
    <dbReference type="NCBI Taxonomy" id="227882"/>
    <lineage>
        <taxon>Bacteria</taxon>
        <taxon>Bacillati</taxon>
        <taxon>Actinomycetota</taxon>
        <taxon>Actinomycetes</taxon>
        <taxon>Kitasatosporales</taxon>
        <taxon>Streptomycetaceae</taxon>
        <taxon>Streptomyces</taxon>
    </lineage>
</organism>
<gene>
    <name evidence="1" type="primary">tdh</name>
    <name type="ordered locus">SAV_1628</name>
</gene>
<keyword id="KW-0963">Cytoplasm</keyword>
<keyword id="KW-0479">Metal-binding</keyword>
<keyword id="KW-0520">NAD</keyword>
<keyword id="KW-0560">Oxidoreductase</keyword>
<keyword id="KW-1185">Reference proteome</keyword>
<keyword id="KW-0862">Zinc</keyword>